<accession>O36378</accession>
<organism>
    <name type="scientific">Alcelaphine herpesvirus 1 (strain C500)</name>
    <name type="common">AlHV-1</name>
    <name type="synonym">Malignant catarrhal fever virus</name>
    <dbReference type="NCBI Taxonomy" id="654901"/>
    <lineage>
        <taxon>Viruses</taxon>
        <taxon>Duplodnaviria</taxon>
        <taxon>Heunggongvirae</taxon>
        <taxon>Peploviricota</taxon>
        <taxon>Herviviricetes</taxon>
        <taxon>Herpesvirales</taxon>
        <taxon>Orthoherpesviridae</taxon>
        <taxon>Gammaherpesvirinae</taxon>
        <taxon>Macavirus</taxon>
        <taxon>Macavirus alcelaphinegamma1</taxon>
    </lineage>
</organism>
<evidence type="ECO:0000255" key="1">
    <source>
        <dbReference type="HAMAP-Rule" id="MF_04013"/>
    </source>
</evidence>
<proteinExistence type="inferred from homology"/>
<keyword id="KW-0238">DNA-binding</keyword>
<keyword id="KW-1048">Host nucleus</keyword>
<keyword id="KW-0378">Hydrolase</keyword>
<keyword id="KW-1185">Reference proteome</keyword>
<keyword id="KW-0231">Viral genome packaging</keyword>
<keyword id="KW-1188">Viral release from host cell</keyword>
<comment type="function">
    <text evidence="1">Component of the molecular motor that translocates viral genomic DNA in empty capsid during DNA packaging. Forms a tripartite terminase complex together with TRM1 and TRM2 in the host cytoplasm. Once the complex reaches the host nucleus, it interacts with the capsid portal vertex. This portal forms a ring in which genomic DNA is translocated into the capsid. TRM3 carries an RNase H-like nuclease activity that plays an important role for the cleavage of concatemeric viral DNA into unit length genomes.</text>
</comment>
<comment type="subunit">
    <text evidence="1">Interacts with the terminase subunits TRM1 and TRM2. Interacts with portal protein.</text>
</comment>
<comment type="subcellular location">
    <subcellularLocation>
        <location evidence="1">Host nucleus</location>
    </subcellularLocation>
    <text evidence="1">Responsible for the nuclear localization of the two others subunits TRM1 and TRM2.</text>
</comment>
<comment type="similarity">
    <text evidence="1">Belongs to the herpesviridae TRM3 protein family.</text>
</comment>
<dbReference type="EC" id="3.1.-.-" evidence="1"/>
<dbReference type="EMBL" id="AF005370">
    <property type="protein sequence ID" value="AAC58075.1"/>
    <property type="molecule type" value="Genomic_DNA"/>
</dbReference>
<dbReference type="PIR" id="T03123">
    <property type="entry name" value="T03123"/>
</dbReference>
<dbReference type="RefSeq" id="NP_065527.1">
    <property type="nucleotide sequence ID" value="NC_002531.1"/>
</dbReference>
<dbReference type="SMR" id="O36378"/>
<dbReference type="KEGG" id="vg:911744"/>
<dbReference type="Proteomes" id="UP000000941">
    <property type="component" value="Segment"/>
</dbReference>
<dbReference type="GO" id="GO:0042025">
    <property type="term" value="C:host cell nucleus"/>
    <property type="evidence" value="ECO:0007669"/>
    <property type="project" value="UniProtKB-SubCell"/>
</dbReference>
<dbReference type="GO" id="GO:0003677">
    <property type="term" value="F:DNA binding"/>
    <property type="evidence" value="ECO:0007669"/>
    <property type="project" value="UniProtKB-KW"/>
</dbReference>
<dbReference type="GO" id="GO:0016787">
    <property type="term" value="F:hydrolase activity"/>
    <property type="evidence" value="ECO:0007669"/>
    <property type="project" value="UniProtKB-KW"/>
</dbReference>
<dbReference type="GO" id="GO:0051276">
    <property type="term" value="P:chromosome organization"/>
    <property type="evidence" value="ECO:0007669"/>
    <property type="project" value="InterPro"/>
</dbReference>
<dbReference type="Gene3D" id="3.30.420.320">
    <property type="match status" value="1"/>
</dbReference>
<dbReference type="Gene3D" id="3.40.50.300">
    <property type="entry name" value="P-loop containing nucleotide triphosphate hydrolases"/>
    <property type="match status" value="1"/>
</dbReference>
<dbReference type="HAMAP" id="MF_04013">
    <property type="entry name" value="HSV_TRM3"/>
    <property type="match status" value="1"/>
</dbReference>
<dbReference type="InterPro" id="IPR003498">
    <property type="entry name" value="DNA_pack_C"/>
</dbReference>
<dbReference type="InterPro" id="IPR038435">
    <property type="entry name" value="DNA_pack_C_sf"/>
</dbReference>
<dbReference type="InterPro" id="IPR003499">
    <property type="entry name" value="DNA_pack_N"/>
</dbReference>
<dbReference type="InterPro" id="IPR033663">
    <property type="entry name" value="HSV_TRM3"/>
</dbReference>
<dbReference type="InterPro" id="IPR027417">
    <property type="entry name" value="P-loop_NTPase"/>
</dbReference>
<dbReference type="Pfam" id="PF02499">
    <property type="entry name" value="DNA_pack_C"/>
    <property type="match status" value="1"/>
</dbReference>
<dbReference type="Pfam" id="PF02500">
    <property type="entry name" value="DNA_pack_N"/>
    <property type="match status" value="1"/>
</dbReference>
<name>TRM3_ALHV1</name>
<protein>
    <recommendedName>
        <fullName evidence="1">Tripartite terminase subunit 3</fullName>
        <ecNumber evidence="1">3.1.-.-</ecNumber>
    </recommendedName>
    <alternativeName>
        <fullName evidence="1">Terminase large subunit</fullName>
    </alternativeName>
</protein>
<reference key="1">
    <citation type="journal article" date="1997" name="J. Virol.">
        <title>Primary structure of the alcelaphine herpesvirus 1 genome.</title>
        <authorList>
            <person name="Ensser A."/>
            <person name="Pflanz R."/>
            <person name="Fleckenstein B."/>
        </authorList>
    </citation>
    <scope>NUCLEOTIDE SEQUENCE [LARGE SCALE GENOMIC DNA]</scope>
</reference>
<gene>
    <name evidence="1" type="primary">TRM3</name>
    <name type="ordered locus">29</name>
</gene>
<feature type="chain" id="PRO_0000405716" description="Tripartite terminase subunit 3">
    <location>
        <begin position="1"/>
        <end position="686"/>
    </location>
</feature>
<feature type="short sequence motif" description="Walker A motif" evidence="1">
    <location>
        <begin position="220"/>
        <end position="227"/>
    </location>
</feature>
<feature type="short sequence motif" description="Walker B motif" evidence="1">
    <location>
        <begin position="315"/>
        <end position="320"/>
    </location>
</feature>
<feature type="active site" description="For ATPase activity" evidence="1">
    <location>
        <position position="320"/>
    </location>
</feature>
<feature type="active site" description="For nuclease activity" evidence="1">
    <location>
        <position position="474"/>
    </location>
</feature>
<feature type="active site" description="For nuclease activity" evidence="1">
    <location>
        <position position="546"/>
    </location>
</feature>
<feature type="active site" description="For nuclease activity" evidence="1">
    <location>
        <position position="658"/>
    </location>
</feature>
<organismHost>
    <name type="scientific">Connochaetes taurinus</name>
    <name type="common">Blue wildebeest</name>
    <dbReference type="NCBI Taxonomy" id="9927"/>
</organismHost>
<sequence length="686" mass="76860">MFYVKVMPALQKACEELQNQWSAKSGKWPVPETPLVAVETRRSERWPHPYLGLLPGVAAYSSTLEDYCHLYNPYIDALTRCDLGQTHRRVATQPVLSDQLCQQLKKLFSCPRNTSVKAKLEFEAAVRTHQALDNSQVFLELKTFVLNLSAFLNKRYSDRSSHIELFQKQLIMHTFFFLVSIKAPELCEKFCNIFKLYFNIDTMDQATLDIFKQKASVFLIPRRHGKTWIVVAIISILLASVQDLRIGYVAHQKHVANAVFTEVINTLHTFFPGKYMDVKKENGTIIFGLPNKKPSTLLCATCFNKNSIRGQTFQLLFVDEANFIKKDALPTILGFMLQKDAKIIFISSSNSSDQSTSFLYNLKGASERMLNVVSYVCSNHKEDFSMQDGLISCPCYSLHVPSYISIDEQIKTTTNLFLDGVFDTELMGDSSCGTLSTFQIISESALSQFELCRIDTASPQVQAHLNSTVHMYIDPAFTNNLDASGTGISVIGRLGAKTKVILGCEHFFLQKLTGTAALQIASCATSLLRSVVIIHPMIKCAQITIEGNSSQDSAVAIANFIDECAPIPVTFYHQSDKTKGVLCPLYLLGQEKAVAFESFIYAMNLGLCKASQLIVSHTIKLSFDPVTYLLEQVRAIKCQSLRDGSHTYHAKQKNLSDDLLVSVVMSLYLSSANTLPFKPLHIERFF</sequence>